<dbReference type="EC" id="6.5.1.4" evidence="1"/>
<dbReference type="EMBL" id="CP000946">
    <property type="protein sequence ID" value="ACA75972.1"/>
    <property type="molecule type" value="Genomic_DNA"/>
</dbReference>
<dbReference type="RefSeq" id="WP_001300557.1">
    <property type="nucleotide sequence ID" value="NZ_MTFT01000001.1"/>
</dbReference>
<dbReference type="SMR" id="B1IP46"/>
<dbReference type="KEGG" id="ecl:EcolC_0294"/>
<dbReference type="HOGENOM" id="CLU_027882_0_0_6"/>
<dbReference type="GO" id="GO:0005737">
    <property type="term" value="C:cytoplasm"/>
    <property type="evidence" value="ECO:0007669"/>
    <property type="project" value="UniProtKB-SubCell"/>
</dbReference>
<dbReference type="GO" id="GO:0005524">
    <property type="term" value="F:ATP binding"/>
    <property type="evidence" value="ECO:0007669"/>
    <property type="project" value="UniProtKB-KW"/>
</dbReference>
<dbReference type="GO" id="GO:0003963">
    <property type="term" value="F:RNA-3'-phosphate cyclase activity"/>
    <property type="evidence" value="ECO:0007669"/>
    <property type="project" value="UniProtKB-UniRule"/>
</dbReference>
<dbReference type="GO" id="GO:0006396">
    <property type="term" value="P:RNA processing"/>
    <property type="evidence" value="ECO:0007669"/>
    <property type="project" value="InterPro"/>
</dbReference>
<dbReference type="FunFam" id="3.65.10.20:FF:000002">
    <property type="entry name" value="GM19193"/>
    <property type="match status" value="1"/>
</dbReference>
<dbReference type="FunFam" id="3.30.360.20:FF:000003">
    <property type="entry name" value="RNA 3'-terminal phosphate cyclase"/>
    <property type="match status" value="1"/>
</dbReference>
<dbReference type="Gene3D" id="3.65.10.20">
    <property type="entry name" value="RNA 3'-terminal phosphate cyclase domain"/>
    <property type="match status" value="1"/>
</dbReference>
<dbReference type="Gene3D" id="3.30.360.20">
    <property type="entry name" value="RNA 3'-terminal phosphate cyclase, insert domain"/>
    <property type="match status" value="1"/>
</dbReference>
<dbReference type="HAMAP" id="MF_00200">
    <property type="entry name" value="RTC"/>
    <property type="match status" value="1"/>
</dbReference>
<dbReference type="InterPro" id="IPR013791">
    <property type="entry name" value="RNA3'-term_phos_cycl_insert"/>
</dbReference>
<dbReference type="InterPro" id="IPR023797">
    <property type="entry name" value="RNA3'_phos_cyclase_dom"/>
</dbReference>
<dbReference type="InterPro" id="IPR037136">
    <property type="entry name" value="RNA3'_phos_cyclase_dom_sf"/>
</dbReference>
<dbReference type="InterPro" id="IPR000228">
    <property type="entry name" value="RNA3'_term_phos_cyc"/>
</dbReference>
<dbReference type="InterPro" id="IPR017770">
    <property type="entry name" value="RNA3'_term_phos_cyc_type_1"/>
</dbReference>
<dbReference type="InterPro" id="IPR020719">
    <property type="entry name" value="RNA3'_term_phos_cycl-like_CS"/>
</dbReference>
<dbReference type="InterPro" id="IPR013792">
    <property type="entry name" value="RNA3'P_cycl/enolpyr_Trfase_a/b"/>
</dbReference>
<dbReference type="InterPro" id="IPR036553">
    <property type="entry name" value="RPTC_insert"/>
</dbReference>
<dbReference type="NCBIfam" id="NF003246">
    <property type="entry name" value="PRK04204.1-2"/>
    <property type="match status" value="1"/>
</dbReference>
<dbReference type="NCBIfam" id="NF003247">
    <property type="entry name" value="PRK04204.1-3"/>
    <property type="match status" value="1"/>
</dbReference>
<dbReference type="NCBIfam" id="TIGR03399">
    <property type="entry name" value="RNA_3prim_cycl"/>
    <property type="match status" value="1"/>
</dbReference>
<dbReference type="PANTHER" id="PTHR11096">
    <property type="entry name" value="RNA 3' TERMINAL PHOSPHATE CYCLASE"/>
    <property type="match status" value="1"/>
</dbReference>
<dbReference type="PANTHER" id="PTHR11096:SF0">
    <property type="entry name" value="RNA 3'-TERMINAL PHOSPHATE CYCLASE"/>
    <property type="match status" value="1"/>
</dbReference>
<dbReference type="Pfam" id="PF01137">
    <property type="entry name" value="RTC"/>
    <property type="match status" value="1"/>
</dbReference>
<dbReference type="Pfam" id="PF05189">
    <property type="entry name" value="RTC_insert"/>
    <property type="match status" value="1"/>
</dbReference>
<dbReference type="PIRSF" id="PIRSF005378">
    <property type="entry name" value="RNA3'_term_phos_cycl_euk"/>
    <property type="match status" value="1"/>
</dbReference>
<dbReference type="SUPFAM" id="SSF55205">
    <property type="entry name" value="EPT/RTPC-like"/>
    <property type="match status" value="2"/>
</dbReference>
<dbReference type="SUPFAM" id="SSF52913">
    <property type="entry name" value="RNA 3'-terminal phosphate cyclase, RPTC, insert domain"/>
    <property type="match status" value="1"/>
</dbReference>
<dbReference type="PROSITE" id="PS01287">
    <property type="entry name" value="RTC"/>
    <property type="match status" value="1"/>
</dbReference>
<proteinExistence type="inferred from homology"/>
<protein>
    <recommendedName>
        <fullName evidence="1">RNA 3'-terminal phosphate cyclase</fullName>
        <shortName evidence="1">RNA cyclase</shortName>
        <shortName evidence="1">RNA-3'-phosphate cyclase</shortName>
        <ecNumber evidence="1">6.5.1.4</ecNumber>
    </recommendedName>
</protein>
<name>RTCA_ECOLC</name>
<accession>B1IP46</accession>
<feature type="chain" id="PRO_1000077722" description="RNA 3'-terminal phosphate cyclase">
    <location>
        <begin position="1"/>
        <end position="338"/>
    </location>
</feature>
<feature type="active site" description="Tele-AMP-histidine intermediate" evidence="1">
    <location>
        <position position="308"/>
    </location>
</feature>
<feature type="binding site" evidence="1">
    <location>
        <position position="103"/>
    </location>
    <ligand>
        <name>ATP</name>
        <dbReference type="ChEBI" id="CHEBI:30616"/>
    </ligand>
</feature>
<feature type="binding site" evidence="1">
    <location>
        <begin position="283"/>
        <end position="287"/>
    </location>
    <ligand>
        <name>ATP</name>
        <dbReference type="ChEBI" id="CHEBI:30616"/>
    </ligand>
</feature>
<organism>
    <name type="scientific">Escherichia coli (strain ATCC 8739 / DSM 1576 / NBRC 3972 / NCIMB 8545 / WDCM 00012 / Crooks)</name>
    <dbReference type="NCBI Taxonomy" id="481805"/>
    <lineage>
        <taxon>Bacteria</taxon>
        <taxon>Pseudomonadati</taxon>
        <taxon>Pseudomonadota</taxon>
        <taxon>Gammaproteobacteria</taxon>
        <taxon>Enterobacterales</taxon>
        <taxon>Enterobacteriaceae</taxon>
        <taxon>Escherichia</taxon>
    </lineage>
</organism>
<reference key="1">
    <citation type="submission" date="2008-02" db="EMBL/GenBank/DDBJ databases">
        <title>Complete sequence of Escherichia coli C str. ATCC 8739.</title>
        <authorList>
            <person name="Copeland A."/>
            <person name="Lucas S."/>
            <person name="Lapidus A."/>
            <person name="Glavina del Rio T."/>
            <person name="Dalin E."/>
            <person name="Tice H."/>
            <person name="Bruce D."/>
            <person name="Goodwin L."/>
            <person name="Pitluck S."/>
            <person name="Kiss H."/>
            <person name="Brettin T."/>
            <person name="Detter J.C."/>
            <person name="Han C."/>
            <person name="Kuske C.R."/>
            <person name="Schmutz J."/>
            <person name="Larimer F."/>
            <person name="Land M."/>
            <person name="Hauser L."/>
            <person name="Kyrpides N."/>
            <person name="Mikhailova N."/>
            <person name="Ingram L."/>
            <person name="Richardson P."/>
        </authorList>
    </citation>
    <scope>NUCLEOTIDE SEQUENCE [LARGE SCALE GENOMIC DNA]</scope>
    <source>
        <strain>ATCC 8739 / DSM 1576 / NBRC 3972 / NCIMB 8545 / WDCM 00012 / Crooks</strain>
    </source>
</reference>
<evidence type="ECO:0000255" key="1">
    <source>
        <dbReference type="HAMAP-Rule" id="MF_00200"/>
    </source>
</evidence>
<keyword id="KW-0067">ATP-binding</keyword>
<keyword id="KW-0963">Cytoplasm</keyword>
<keyword id="KW-0436">Ligase</keyword>
<keyword id="KW-0547">Nucleotide-binding</keyword>
<gene>
    <name evidence="1" type="primary">rtcA</name>
    <name type="ordered locus">EcolC_0294</name>
</gene>
<comment type="function">
    <text evidence="1">Catalyzes the conversion of 3'-phosphate to a 2',3'-cyclic phosphodiester at the end of RNA. The mechanism of action of the enzyme occurs in 3 steps: (A) adenylation of the enzyme by ATP; (B) transfer of adenylate to an RNA-N3'P to produce RNA-N3'PP5'A; (C) and attack of the adjacent 2'-hydroxyl on the 3'-phosphorus in the diester linkage to produce the cyclic end product. The biological role of this enzyme is unknown but it is likely to function in some aspects of cellular RNA processing.</text>
</comment>
<comment type="catalytic activity">
    <reaction evidence="1">
        <text>a 3'-end 3'-phospho-ribonucleotide-RNA + ATP = a 3'-end 2',3'-cyclophospho-ribonucleotide-RNA + AMP + diphosphate</text>
        <dbReference type="Rhea" id="RHEA:23976"/>
        <dbReference type="Rhea" id="RHEA-COMP:10463"/>
        <dbReference type="Rhea" id="RHEA-COMP:10464"/>
        <dbReference type="ChEBI" id="CHEBI:30616"/>
        <dbReference type="ChEBI" id="CHEBI:33019"/>
        <dbReference type="ChEBI" id="CHEBI:83062"/>
        <dbReference type="ChEBI" id="CHEBI:83064"/>
        <dbReference type="ChEBI" id="CHEBI:456215"/>
        <dbReference type="EC" id="6.5.1.4"/>
    </reaction>
</comment>
<comment type="subcellular location">
    <subcellularLocation>
        <location evidence="1">Cytoplasm</location>
    </subcellularLocation>
</comment>
<comment type="similarity">
    <text evidence="1">Belongs to the RNA 3'-terminal cyclase family. Type 1 subfamily.</text>
</comment>
<sequence>MKRMIALDGAQGEGGGQILRSALSLSMITGQPFTITGIRAGRAKPGLLRQHLTAVKAAAEICRATVEGAELGSQRLLFRPGTVRGGDYRFAIGSAGSCTLVLQTVLPALWFADGPSRVEVSGGTDNPSAPPADFIRRVLEPLLAKMGIHQQTTLLRHGFYPAGGGVVATEVSPVASFNTLQLGERGNIVQMRGEVLLAGVPRHVAEREIATLAGSFSLHEQNIHNLPRDQGPGNTVSLEVESENITERFFVVGEKRVSAEVVAAQLVKEVKRYLASTAAVGEYLADQLVLPMALAGAGEFTVAHPSCHLLTNIAVVERFLPVRFSLIETDGVTRVSIE</sequence>